<gene>
    <name type="primary">OR2L3</name>
</gene>
<reference key="1">
    <citation type="submission" date="2001-07" db="EMBL/GenBank/DDBJ databases">
        <title>Genome-wide discovery and analysis of human seven transmembrane helix receptor genes.</title>
        <authorList>
            <person name="Suwa M."/>
            <person name="Sato T."/>
            <person name="Okouchi I."/>
            <person name="Arita M."/>
            <person name="Futami K."/>
            <person name="Matsumoto S."/>
            <person name="Tsutsumi S."/>
            <person name="Aburatani H."/>
            <person name="Asai K."/>
            <person name="Akiyama Y."/>
        </authorList>
    </citation>
    <scope>NUCLEOTIDE SEQUENCE [GENOMIC DNA]</scope>
</reference>
<reference key="2">
    <citation type="submission" date="2005-07" db="EMBL/GenBank/DDBJ databases">
        <authorList>
            <person name="Mural R.J."/>
            <person name="Istrail S."/>
            <person name="Sutton G.G."/>
            <person name="Florea L."/>
            <person name="Halpern A.L."/>
            <person name="Mobarry C.M."/>
            <person name="Lippert R."/>
            <person name="Walenz B."/>
            <person name="Shatkay H."/>
            <person name="Dew I."/>
            <person name="Miller J.R."/>
            <person name="Flanigan M.J."/>
            <person name="Edwards N.J."/>
            <person name="Bolanos R."/>
            <person name="Fasulo D."/>
            <person name="Halldorsson B.V."/>
            <person name="Hannenhalli S."/>
            <person name="Turner R."/>
            <person name="Yooseph S."/>
            <person name="Lu F."/>
            <person name="Nusskern D.R."/>
            <person name="Shue B.C."/>
            <person name="Zheng X.H."/>
            <person name="Zhong F."/>
            <person name="Delcher A.L."/>
            <person name="Huson D.H."/>
            <person name="Kravitz S.A."/>
            <person name="Mouchard L."/>
            <person name="Reinert K."/>
            <person name="Remington K.A."/>
            <person name="Clark A.G."/>
            <person name="Waterman M.S."/>
            <person name="Eichler E.E."/>
            <person name="Adams M.D."/>
            <person name="Hunkapiller M.W."/>
            <person name="Myers E.W."/>
            <person name="Venter J.C."/>
        </authorList>
    </citation>
    <scope>NUCLEOTIDE SEQUENCE [LARGE SCALE GENOMIC DNA]</scope>
</reference>
<reference key="3">
    <citation type="journal article" date="2004" name="Genome Res.">
        <title>The status, quality, and expansion of the NIH full-length cDNA project: the Mammalian Gene Collection (MGC).</title>
        <authorList>
            <consortium name="The MGC Project Team"/>
        </authorList>
    </citation>
    <scope>NUCLEOTIDE SEQUENCE [LARGE SCALE MRNA]</scope>
    <source>
        <tissue>Testis</tissue>
    </source>
</reference>
<sequence length="312" mass="35282">MENYNQTSTDFILLGFFPPSRIGLFLFILIVFIFLMALIGNLSMILLIFLDTHLHTPMYFLLSQLSLIDLNYISTIVPKMASDFLSGNKSISFTGCGIQSFFFSALGGAEALLLASMAYDRYIAICFPLHYPIRMSKRMCVLMITGSWIIGSINACAHTVYVLHIPYCQSRAINHFFCDVPAMVTLACMDTWVYEGTVFLSTTIFLVFPFIAISCSYGRVLLAVYHMKSAEGRKKAYLTCSTHLTVVTFYYAPFVYTYLRPRSLRSPTEDKVLAVFYTTLTPMLNPIIYSLRNKEVMGALTRVSQRICSGKM</sequence>
<accession>Q8NG85</accession>
<accession>B9EH44</accession>
<protein>
    <recommendedName>
        <fullName>Olfactory receptor 2L3</fullName>
    </recommendedName>
</protein>
<name>OR2L3_HUMAN</name>
<feature type="chain" id="PRO_0000150487" description="Olfactory receptor 2L3">
    <location>
        <begin position="1"/>
        <end position="312"/>
    </location>
</feature>
<feature type="topological domain" description="Extracellular" evidence="1">
    <location>
        <begin position="1"/>
        <end position="24"/>
    </location>
</feature>
<feature type="transmembrane region" description="Helical; Name=1" evidence="1">
    <location>
        <begin position="25"/>
        <end position="48"/>
    </location>
</feature>
<feature type="topological domain" description="Cytoplasmic" evidence="1">
    <location>
        <begin position="49"/>
        <end position="56"/>
    </location>
</feature>
<feature type="transmembrane region" description="Helical; Name=2" evidence="1">
    <location>
        <begin position="57"/>
        <end position="78"/>
    </location>
</feature>
<feature type="topological domain" description="Extracellular" evidence="1">
    <location>
        <begin position="79"/>
        <end position="99"/>
    </location>
</feature>
<feature type="transmembrane region" description="Helical; Name=3" evidence="1">
    <location>
        <begin position="100"/>
        <end position="119"/>
    </location>
</feature>
<feature type="topological domain" description="Cytoplasmic" evidence="1">
    <location>
        <begin position="120"/>
        <end position="138"/>
    </location>
</feature>
<feature type="transmembrane region" description="Helical; Name=4" evidence="1">
    <location>
        <begin position="139"/>
        <end position="157"/>
    </location>
</feature>
<feature type="topological domain" description="Extracellular" evidence="1">
    <location>
        <begin position="158"/>
        <end position="194"/>
    </location>
</feature>
<feature type="transmembrane region" description="Helical; Name=5" evidence="1">
    <location>
        <begin position="195"/>
        <end position="218"/>
    </location>
</feature>
<feature type="topological domain" description="Cytoplasmic" evidence="1">
    <location>
        <begin position="219"/>
        <end position="235"/>
    </location>
</feature>
<feature type="transmembrane region" description="Helical; Name=6" evidence="1">
    <location>
        <begin position="236"/>
        <end position="258"/>
    </location>
</feature>
<feature type="topological domain" description="Extracellular" evidence="1">
    <location>
        <begin position="259"/>
        <end position="271"/>
    </location>
</feature>
<feature type="transmembrane region" description="Helical; Name=7" evidence="1">
    <location>
        <begin position="272"/>
        <end position="291"/>
    </location>
</feature>
<feature type="topological domain" description="Cytoplasmic" evidence="1">
    <location>
        <begin position="292"/>
        <end position="312"/>
    </location>
</feature>
<feature type="glycosylation site" description="N-linked (GlcNAc...) asparagine" evidence="1">
    <location>
        <position position="5"/>
    </location>
</feature>
<feature type="glycosylation site" description="N-linked (GlcNAc...) asparagine" evidence="1">
    <location>
        <position position="88"/>
    </location>
</feature>
<feature type="disulfide bond" evidence="2">
    <location>
        <begin position="96"/>
        <end position="188"/>
    </location>
</feature>
<feature type="sequence variant" id="VAR_062021" description="In dbSNP:rs6666048.">
    <original>I</original>
    <variation>T</variation>
    <location>
        <position position="39"/>
    </location>
</feature>
<feature type="sequence variant" id="VAR_062022" description="In dbSNP:rs6658227.">
    <original>P</original>
    <variation>L</variation>
    <location>
        <position position="78"/>
    </location>
</feature>
<feature type="sequence variant" id="VAR_053146" description="In dbSNP:rs6658256.">
    <original>S</original>
    <variation>L</variation>
    <location>
        <position position="104"/>
    </location>
</feature>
<feature type="sequence variant" id="VAR_062023" description="In dbSNP:rs55937620.">
    <original>M</original>
    <variation>V</variation>
    <location>
        <position position="139"/>
    </location>
</feature>
<dbReference type="EMBL" id="AB065950">
    <property type="protein sequence ID" value="BAC06163.1"/>
    <property type="molecule type" value="Genomic_DNA"/>
</dbReference>
<dbReference type="EMBL" id="CH471148">
    <property type="protein sequence ID" value="EAW77215.1"/>
    <property type="molecule type" value="Genomic_DNA"/>
</dbReference>
<dbReference type="EMBL" id="BC137039">
    <property type="protein sequence ID" value="AAI37040.1"/>
    <property type="molecule type" value="mRNA"/>
</dbReference>
<dbReference type="EMBL" id="BC137040">
    <property type="protein sequence ID" value="AAI37041.1"/>
    <property type="molecule type" value="mRNA"/>
</dbReference>
<dbReference type="CCDS" id="CCDS31104.1"/>
<dbReference type="RefSeq" id="NP_001004687.1">
    <property type="nucleotide sequence ID" value="NM_001004687.2"/>
</dbReference>
<dbReference type="SMR" id="Q8NG85"/>
<dbReference type="FunCoup" id="Q8NG85">
    <property type="interactions" value="450"/>
</dbReference>
<dbReference type="STRING" id="9606.ENSP00000493020"/>
<dbReference type="GlyCosmos" id="Q8NG85">
    <property type="glycosylation" value="2 sites, No reported glycans"/>
</dbReference>
<dbReference type="GlyGen" id="Q8NG85">
    <property type="glycosylation" value="2 sites"/>
</dbReference>
<dbReference type="iPTMnet" id="Q8NG85"/>
<dbReference type="PhosphoSitePlus" id="Q8NG85"/>
<dbReference type="BioMuta" id="OR2L3"/>
<dbReference type="DMDM" id="74762575"/>
<dbReference type="MassIVE" id="Q8NG85"/>
<dbReference type="PaxDb" id="9606-ENSP00000353044"/>
<dbReference type="PeptideAtlas" id="Q8NG85"/>
<dbReference type="Antibodypedia" id="34744">
    <property type="antibodies" value="28 antibodies from 12 providers"/>
</dbReference>
<dbReference type="DNASU" id="391192"/>
<dbReference type="Ensembl" id="ENST00000359959.4">
    <property type="protein sequence ID" value="ENSP00000353044.3"/>
    <property type="gene ID" value="ENSG00000198128.4"/>
</dbReference>
<dbReference type="Ensembl" id="ENST00000641161.1">
    <property type="protein sequence ID" value="ENSP00000493424.1"/>
    <property type="gene ID" value="ENSG00000198128.4"/>
</dbReference>
<dbReference type="Ensembl" id="ENST00000641649.1">
    <property type="protein sequence ID" value="ENSP00000493020.1"/>
    <property type="gene ID" value="ENSG00000198128.4"/>
</dbReference>
<dbReference type="GeneID" id="391192"/>
<dbReference type="KEGG" id="hsa:391192"/>
<dbReference type="MANE-Select" id="ENST00000359959.4">
    <property type="protein sequence ID" value="ENSP00000353044.3"/>
    <property type="RefSeq nucleotide sequence ID" value="NM_001004687.2"/>
    <property type="RefSeq protein sequence ID" value="NP_001004687.1"/>
</dbReference>
<dbReference type="UCSC" id="uc001idx.1">
    <property type="organism name" value="human"/>
</dbReference>
<dbReference type="AGR" id="HGNC:15009"/>
<dbReference type="CTD" id="391192"/>
<dbReference type="GeneCards" id="OR2L3"/>
<dbReference type="HGNC" id="HGNC:15009">
    <property type="gene designation" value="OR2L3"/>
</dbReference>
<dbReference type="HPA" id="ENSG00000198128">
    <property type="expression patterns" value="Not detected"/>
</dbReference>
<dbReference type="neXtProt" id="NX_Q8NG85"/>
<dbReference type="OpenTargets" id="ENSG00000198128"/>
<dbReference type="PharmGKB" id="PA32184"/>
<dbReference type="VEuPathDB" id="HostDB:ENSG00000198128"/>
<dbReference type="eggNOG" id="ENOG502RTYI">
    <property type="taxonomic scope" value="Eukaryota"/>
</dbReference>
<dbReference type="GeneTree" id="ENSGT01130000278325"/>
<dbReference type="HOGENOM" id="CLU_012526_1_0_1"/>
<dbReference type="InParanoid" id="Q8NG85"/>
<dbReference type="OMA" id="HAICRMQ"/>
<dbReference type="OrthoDB" id="9834388at2759"/>
<dbReference type="PAN-GO" id="Q8NG85">
    <property type="GO annotations" value="0 GO annotations based on evolutionary models"/>
</dbReference>
<dbReference type="PhylomeDB" id="Q8NG85"/>
<dbReference type="TreeFam" id="TF337295"/>
<dbReference type="PathwayCommons" id="Q8NG85"/>
<dbReference type="Reactome" id="R-HSA-9752946">
    <property type="pathway name" value="Expression and translocation of olfactory receptors"/>
</dbReference>
<dbReference type="BioGRID-ORCS" id="391192">
    <property type="hits" value="4 hits in 649 CRISPR screens"/>
</dbReference>
<dbReference type="GenomeRNAi" id="391192"/>
<dbReference type="Pharos" id="Q8NG85">
    <property type="development level" value="Tdark"/>
</dbReference>
<dbReference type="PRO" id="PR:Q8NG85"/>
<dbReference type="Proteomes" id="UP000005640">
    <property type="component" value="Chromosome 1"/>
</dbReference>
<dbReference type="RNAct" id="Q8NG85">
    <property type="molecule type" value="protein"/>
</dbReference>
<dbReference type="Bgee" id="ENSG00000198128">
    <property type="expression patterns" value="Expressed in cortical plate and 13 other cell types or tissues"/>
</dbReference>
<dbReference type="GO" id="GO:0005886">
    <property type="term" value="C:plasma membrane"/>
    <property type="evidence" value="ECO:0000318"/>
    <property type="project" value="GO_Central"/>
</dbReference>
<dbReference type="GO" id="GO:0004930">
    <property type="term" value="F:G protein-coupled receptor activity"/>
    <property type="evidence" value="ECO:0007669"/>
    <property type="project" value="UniProtKB-KW"/>
</dbReference>
<dbReference type="GO" id="GO:0004984">
    <property type="term" value="F:olfactory receptor activity"/>
    <property type="evidence" value="ECO:0000318"/>
    <property type="project" value="GO_Central"/>
</dbReference>
<dbReference type="GO" id="GO:0050911">
    <property type="term" value="P:detection of chemical stimulus involved in sensory perception of smell"/>
    <property type="evidence" value="ECO:0000318"/>
    <property type="project" value="GO_Central"/>
</dbReference>
<dbReference type="CDD" id="cd15421">
    <property type="entry name" value="7tmA_OR2T-like"/>
    <property type="match status" value="1"/>
</dbReference>
<dbReference type="FunFam" id="1.10.1220.70:FF:000001">
    <property type="entry name" value="Olfactory receptor"/>
    <property type="match status" value="1"/>
</dbReference>
<dbReference type="FunFam" id="1.20.1070.10:FF:000008">
    <property type="entry name" value="Olfactory receptor"/>
    <property type="match status" value="1"/>
</dbReference>
<dbReference type="Gene3D" id="1.20.1070.10">
    <property type="entry name" value="Rhodopsin 7-helix transmembrane proteins"/>
    <property type="match status" value="1"/>
</dbReference>
<dbReference type="InterPro" id="IPR000276">
    <property type="entry name" value="GPCR_Rhodpsn"/>
</dbReference>
<dbReference type="InterPro" id="IPR017452">
    <property type="entry name" value="GPCR_Rhodpsn_7TM"/>
</dbReference>
<dbReference type="InterPro" id="IPR000725">
    <property type="entry name" value="Olfact_rcpt"/>
</dbReference>
<dbReference type="PANTHER" id="PTHR26453">
    <property type="entry name" value="OLFACTORY RECEPTOR"/>
    <property type="match status" value="1"/>
</dbReference>
<dbReference type="Pfam" id="PF13853">
    <property type="entry name" value="7tm_4"/>
    <property type="match status" value="1"/>
</dbReference>
<dbReference type="PRINTS" id="PR00237">
    <property type="entry name" value="GPCRRHODOPSN"/>
</dbReference>
<dbReference type="PRINTS" id="PR00245">
    <property type="entry name" value="OLFACTORYR"/>
</dbReference>
<dbReference type="SUPFAM" id="SSF81321">
    <property type="entry name" value="Family A G protein-coupled receptor-like"/>
    <property type="match status" value="1"/>
</dbReference>
<dbReference type="PROSITE" id="PS00237">
    <property type="entry name" value="G_PROTEIN_RECEP_F1_1"/>
    <property type="match status" value="1"/>
</dbReference>
<dbReference type="PROSITE" id="PS50262">
    <property type="entry name" value="G_PROTEIN_RECEP_F1_2"/>
    <property type="match status" value="1"/>
</dbReference>
<organism>
    <name type="scientific">Homo sapiens</name>
    <name type="common">Human</name>
    <dbReference type="NCBI Taxonomy" id="9606"/>
    <lineage>
        <taxon>Eukaryota</taxon>
        <taxon>Metazoa</taxon>
        <taxon>Chordata</taxon>
        <taxon>Craniata</taxon>
        <taxon>Vertebrata</taxon>
        <taxon>Euteleostomi</taxon>
        <taxon>Mammalia</taxon>
        <taxon>Eutheria</taxon>
        <taxon>Euarchontoglires</taxon>
        <taxon>Primates</taxon>
        <taxon>Haplorrhini</taxon>
        <taxon>Catarrhini</taxon>
        <taxon>Hominidae</taxon>
        <taxon>Homo</taxon>
    </lineage>
</organism>
<evidence type="ECO:0000255" key="1"/>
<evidence type="ECO:0000255" key="2">
    <source>
        <dbReference type="PROSITE-ProRule" id="PRU00521"/>
    </source>
</evidence>
<evidence type="ECO:0000305" key="3"/>
<proteinExistence type="evidence at transcript level"/>
<keyword id="KW-1003">Cell membrane</keyword>
<keyword id="KW-1015">Disulfide bond</keyword>
<keyword id="KW-0297">G-protein coupled receptor</keyword>
<keyword id="KW-0325">Glycoprotein</keyword>
<keyword id="KW-0472">Membrane</keyword>
<keyword id="KW-0552">Olfaction</keyword>
<keyword id="KW-0675">Receptor</keyword>
<keyword id="KW-1185">Reference proteome</keyword>
<keyword id="KW-0716">Sensory transduction</keyword>
<keyword id="KW-0807">Transducer</keyword>
<keyword id="KW-0812">Transmembrane</keyword>
<keyword id="KW-1133">Transmembrane helix</keyword>
<comment type="function">
    <text evidence="3">Odorant receptor.</text>
</comment>
<comment type="subcellular location">
    <subcellularLocation>
        <location>Cell membrane</location>
        <topology>Multi-pass membrane protein</topology>
    </subcellularLocation>
</comment>
<comment type="similarity">
    <text evidence="2">Belongs to the G-protein coupled receptor 1 family.</text>
</comment>
<comment type="online information" name="Human Olfactory Receptor Data Exploratorium (HORDE)">
    <link uri="http://genome.weizmann.ac.il/horde/card/index/symbol:OR2L3"/>
</comment>